<proteinExistence type="inferred from homology"/>
<comment type="catalytic activity">
    <reaction evidence="1">
        <text>tRNA(Leu) + L-leucine + ATP = L-leucyl-tRNA(Leu) + AMP + diphosphate</text>
        <dbReference type="Rhea" id="RHEA:11688"/>
        <dbReference type="Rhea" id="RHEA-COMP:9613"/>
        <dbReference type="Rhea" id="RHEA-COMP:9622"/>
        <dbReference type="ChEBI" id="CHEBI:30616"/>
        <dbReference type="ChEBI" id="CHEBI:33019"/>
        <dbReference type="ChEBI" id="CHEBI:57427"/>
        <dbReference type="ChEBI" id="CHEBI:78442"/>
        <dbReference type="ChEBI" id="CHEBI:78494"/>
        <dbReference type="ChEBI" id="CHEBI:456215"/>
        <dbReference type="EC" id="6.1.1.4"/>
    </reaction>
</comment>
<comment type="subcellular location">
    <subcellularLocation>
        <location evidence="1">Cytoplasm</location>
    </subcellularLocation>
</comment>
<comment type="similarity">
    <text evidence="1">Belongs to the class-I aminoacyl-tRNA synthetase family.</text>
</comment>
<reference key="1">
    <citation type="submission" date="2007-11" db="EMBL/GenBank/DDBJ databases">
        <title>Complete sequence of Delftia acidovorans DSM 14801 / SPH-1.</title>
        <authorList>
            <person name="Copeland A."/>
            <person name="Lucas S."/>
            <person name="Lapidus A."/>
            <person name="Barry K."/>
            <person name="Glavina del Rio T."/>
            <person name="Dalin E."/>
            <person name="Tice H."/>
            <person name="Pitluck S."/>
            <person name="Lowry S."/>
            <person name="Clum A."/>
            <person name="Schmutz J."/>
            <person name="Larimer F."/>
            <person name="Land M."/>
            <person name="Hauser L."/>
            <person name="Kyrpides N."/>
            <person name="Kim E."/>
            <person name="Schleheck D."/>
            <person name="Richardson P."/>
        </authorList>
    </citation>
    <scope>NUCLEOTIDE SEQUENCE [LARGE SCALE GENOMIC DNA]</scope>
    <source>
        <strain>DSM 14801 / SPH-1</strain>
    </source>
</reference>
<protein>
    <recommendedName>
        <fullName evidence="1">Leucine--tRNA ligase</fullName>
        <ecNumber evidence="1">6.1.1.4</ecNumber>
    </recommendedName>
    <alternativeName>
        <fullName evidence="1">Leucyl-tRNA synthetase</fullName>
        <shortName evidence="1">LeuRS</shortName>
    </alternativeName>
</protein>
<name>SYL_DELAS</name>
<organism>
    <name type="scientific">Delftia acidovorans (strain DSM 14801 / SPH-1)</name>
    <dbReference type="NCBI Taxonomy" id="398578"/>
    <lineage>
        <taxon>Bacteria</taxon>
        <taxon>Pseudomonadati</taxon>
        <taxon>Pseudomonadota</taxon>
        <taxon>Betaproteobacteria</taxon>
        <taxon>Burkholderiales</taxon>
        <taxon>Comamonadaceae</taxon>
        <taxon>Delftia</taxon>
    </lineage>
</organism>
<evidence type="ECO:0000255" key="1">
    <source>
        <dbReference type="HAMAP-Rule" id="MF_00049"/>
    </source>
</evidence>
<sequence length="911" mass="101345">MQEKYNHIDVERAAQDHWSARDAYRVTEDQAKPKFYACSMLPYPSGKLHMGHVRNYTINDMLTRQLRMKGYNVLMPMGWDAFGLPAENAALKNKVPPAQWTYDNIAYMKKQMQAMGLAIDWSREIATCDPDYYKWNQWLFLKMLEKGIAYRKTQVVNWDPVDQTVLANEQVIDGRGWRTGAPVEKREIPGYYLKITDYAQELLDHVQVGGDKATLTGWPEKVRLMQENWIGKSSGVRFAFTHDIRGADGQPIQDGRLYVFTTRADTIMGVTFCAVAPEHPLALHAAATSPKLAAFIEECKKGGTTEAELAVKEKEGLPTGLFVTHPLTGAQVEVWVGNYVLMSYGDGAVMGVPAHDERDFAFAKKYGIAIRQVIAVEGETFSTEAWADWYGDKQRAVCIESGELDGLPHAAAVDKVAELLAAKGLGEKKTTWRLRDWGVSRQRYWGTPIPIIHCEDCGAQPVPAKDLPVVLPQDLVPDGSGNPLIKSEAFHAGVVCPCCGKSARRETDTMDTFVDSSWYFMRYCDARNSEQMVAEGAEYWMRDQNAATGGSGMDQYIGGIEHAILHLLYARFWTKVMRDLGLVKVDEPFTKLLTQGMVLNHIYSRRTAKGAKEYFWPKDVEHVFDETGKIVGAKLKAEVDSADGLLPVGTDIDYEGVGTMSKSKNNGIDPQELIEKYGADTARLYTMFTAPPELTLEWNDAAVEGSYRFLRRVYNFGAKLSQMDMAGAVQSVAGAKSLDDVEFGKAAKSLRLEIHTVLKQVEYDYQRMQYNTVVSGAMKMINALEDFKSFDDAGAQVALIEGFGILLRVLYPATPHLAHALWSELGYAAHLGDVLDAPWPQVDPQALVQDEISLVLQVNGKLRGAILVSSTADKAEIERIALANEECQKFTNGAVPKKVIVVPGRLVNVVV</sequence>
<dbReference type="EC" id="6.1.1.4" evidence="1"/>
<dbReference type="EMBL" id="CP000884">
    <property type="protein sequence ID" value="ABX38631.1"/>
    <property type="molecule type" value="Genomic_DNA"/>
</dbReference>
<dbReference type="RefSeq" id="WP_012207800.1">
    <property type="nucleotide sequence ID" value="NC_010002.1"/>
</dbReference>
<dbReference type="SMR" id="A9C1G8"/>
<dbReference type="STRING" id="398578.Daci_6003"/>
<dbReference type="GeneID" id="24114088"/>
<dbReference type="KEGG" id="dac:Daci_6003"/>
<dbReference type="eggNOG" id="COG0495">
    <property type="taxonomic scope" value="Bacteria"/>
</dbReference>
<dbReference type="HOGENOM" id="CLU_004427_0_0_4"/>
<dbReference type="Proteomes" id="UP000000784">
    <property type="component" value="Chromosome"/>
</dbReference>
<dbReference type="GO" id="GO:0005829">
    <property type="term" value="C:cytosol"/>
    <property type="evidence" value="ECO:0007669"/>
    <property type="project" value="TreeGrafter"/>
</dbReference>
<dbReference type="GO" id="GO:0002161">
    <property type="term" value="F:aminoacyl-tRNA deacylase activity"/>
    <property type="evidence" value="ECO:0007669"/>
    <property type="project" value="InterPro"/>
</dbReference>
<dbReference type="GO" id="GO:0005524">
    <property type="term" value="F:ATP binding"/>
    <property type="evidence" value="ECO:0007669"/>
    <property type="project" value="UniProtKB-UniRule"/>
</dbReference>
<dbReference type="GO" id="GO:0004823">
    <property type="term" value="F:leucine-tRNA ligase activity"/>
    <property type="evidence" value="ECO:0007669"/>
    <property type="project" value="UniProtKB-UniRule"/>
</dbReference>
<dbReference type="GO" id="GO:0006429">
    <property type="term" value="P:leucyl-tRNA aminoacylation"/>
    <property type="evidence" value="ECO:0007669"/>
    <property type="project" value="UniProtKB-UniRule"/>
</dbReference>
<dbReference type="CDD" id="cd07958">
    <property type="entry name" value="Anticodon_Ia_Leu_BEm"/>
    <property type="match status" value="1"/>
</dbReference>
<dbReference type="CDD" id="cd00812">
    <property type="entry name" value="LeuRS_core"/>
    <property type="match status" value="1"/>
</dbReference>
<dbReference type="FunFam" id="1.10.730.10:FF:000003">
    <property type="entry name" value="Leucine--tRNA ligase"/>
    <property type="match status" value="1"/>
</dbReference>
<dbReference type="FunFam" id="3.40.50.620:FF:000003">
    <property type="entry name" value="Leucine--tRNA ligase"/>
    <property type="match status" value="1"/>
</dbReference>
<dbReference type="FunFam" id="3.40.50.620:FF:000056">
    <property type="entry name" value="Leucine--tRNA ligase"/>
    <property type="match status" value="1"/>
</dbReference>
<dbReference type="FunFam" id="3.90.740.10:FF:000012">
    <property type="entry name" value="Leucine--tRNA ligase"/>
    <property type="match status" value="1"/>
</dbReference>
<dbReference type="Gene3D" id="2.20.28.290">
    <property type="match status" value="1"/>
</dbReference>
<dbReference type="Gene3D" id="3.10.20.590">
    <property type="match status" value="1"/>
</dbReference>
<dbReference type="Gene3D" id="3.40.50.620">
    <property type="entry name" value="HUPs"/>
    <property type="match status" value="2"/>
</dbReference>
<dbReference type="Gene3D" id="1.10.730.10">
    <property type="entry name" value="Isoleucyl-tRNA Synthetase, Domain 1"/>
    <property type="match status" value="2"/>
</dbReference>
<dbReference type="Gene3D" id="3.90.740.10">
    <property type="entry name" value="Valyl/Leucyl/Isoleucyl-tRNA synthetase, editing domain"/>
    <property type="match status" value="1"/>
</dbReference>
<dbReference type="HAMAP" id="MF_00049_B">
    <property type="entry name" value="Leu_tRNA_synth_B"/>
    <property type="match status" value="1"/>
</dbReference>
<dbReference type="InterPro" id="IPR001412">
    <property type="entry name" value="aa-tRNA-synth_I_CS"/>
</dbReference>
<dbReference type="InterPro" id="IPR002300">
    <property type="entry name" value="aa-tRNA-synth_Ia"/>
</dbReference>
<dbReference type="InterPro" id="IPR002302">
    <property type="entry name" value="Leu-tRNA-ligase"/>
</dbReference>
<dbReference type="InterPro" id="IPR025709">
    <property type="entry name" value="Leu_tRNA-synth_edit"/>
</dbReference>
<dbReference type="InterPro" id="IPR013155">
    <property type="entry name" value="M/V/L/I-tRNA-synth_anticd-bd"/>
</dbReference>
<dbReference type="InterPro" id="IPR014729">
    <property type="entry name" value="Rossmann-like_a/b/a_fold"/>
</dbReference>
<dbReference type="InterPro" id="IPR009080">
    <property type="entry name" value="tRNAsynth_Ia_anticodon-bd"/>
</dbReference>
<dbReference type="InterPro" id="IPR009008">
    <property type="entry name" value="Val/Leu/Ile-tRNA-synth_edit"/>
</dbReference>
<dbReference type="NCBIfam" id="TIGR00396">
    <property type="entry name" value="leuS_bact"/>
    <property type="match status" value="1"/>
</dbReference>
<dbReference type="PANTHER" id="PTHR43740:SF2">
    <property type="entry name" value="LEUCINE--TRNA LIGASE, MITOCHONDRIAL"/>
    <property type="match status" value="1"/>
</dbReference>
<dbReference type="PANTHER" id="PTHR43740">
    <property type="entry name" value="LEUCYL-TRNA SYNTHETASE"/>
    <property type="match status" value="1"/>
</dbReference>
<dbReference type="Pfam" id="PF08264">
    <property type="entry name" value="Anticodon_1"/>
    <property type="match status" value="1"/>
</dbReference>
<dbReference type="Pfam" id="PF00133">
    <property type="entry name" value="tRNA-synt_1"/>
    <property type="match status" value="3"/>
</dbReference>
<dbReference type="Pfam" id="PF13603">
    <property type="entry name" value="tRNA-synt_1_2"/>
    <property type="match status" value="1"/>
</dbReference>
<dbReference type="PRINTS" id="PR00985">
    <property type="entry name" value="TRNASYNTHLEU"/>
</dbReference>
<dbReference type="SUPFAM" id="SSF47323">
    <property type="entry name" value="Anticodon-binding domain of a subclass of class I aminoacyl-tRNA synthetases"/>
    <property type="match status" value="1"/>
</dbReference>
<dbReference type="SUPFAM" id="SSF52374">
    <property type="entry name" value="Nucleotidylyl transferase"/>
    <property type="match status" value="1"/>
</dbReference>
<dbReference type="SUPFAM" id="SSF50677">
    <property type="entry name" value="ValRS/IleRS/LeuRS editing domain"/>
    <property type="match status" value="1"/>
</dbReference>
<dbReference type="PROSITE" id="PS00178">
    <property type="entry name" value="AA_TRNA_LIGASE_I"/>
    <property type="match status" value="1"/>
</dbReference>
<gene>
    <name evidence="1" type="primary">leuS</name>
    <name type="ordered locus">Daci_6003</name>
</gene>
<keyword id="KW-0030">Aminoacyl-tRNA synthetase</keyword>
<keyword id="KW-0067">ATP-binding</keyword>
<keyword id="KW-0963">Cytoplasm</keyword>
<keyword id="KW-0436">Ligase</keyword>
<keyword id="KW-0547">Nucleotide-binding</keyword>
<keyword id="KW-0648">Protein biosynthesis</keyword>
<keyword id="KW-1185">Reference proteome</keyword>
<accession>A9C1G8</accession>
<feature type="chain" id="PRO_1000091312" description="Leucine--tRNA ligase">
    <location>
        <begin position="1"/>
        <end position="911"/>
    </location>
</feature>
<feature type="short sequence motif" description="'HIGH' region">
    <location>
        <begin position="42"/>
        <end position="52"/>
    </location>
</feature>
<feature type="short sequence motif" description="'KMSKS' region">
    <location>
        <begin position="659"/>
        <end position="663"/>
    </location>
</feature>
<feature type="binding site" evidence="1">
    <location>
        <position position="662"/>
    </location>
    <ligand>
        <name>ATP</name>
        <dbReference type="ChEBI" id="CHEBI:30616"/>
    </ligand>
</feature>